<dbReference type="EMBL" id="CP001392">
    <property type="protein sequence ID" value="ACM31788.1"/>
    <property type="molecule type" value="Genomic_DNA"/>
</dbReference>
<dbReference type="RefSeq" id="WP_011803773.1">
    <property type="nucleotide sequence ID" value="NC_011992.1"/>
</dbReference>
<dbReference type="SMR" id="B9MBA4"/>
<dbReference type="KEGG" id="dia:Dtpsy_0304"/>
<dbReference type="eggNOG" id="COG0355">
    <property type="taxonomic scope" value="Bacteria"/>
</dbReference>
<dbReference type="HOGENOM" id="CLU_084338_2_0_4"/>
<dbReference type="Proteomes" id="UP000000450">
    <property type="component" value="Chromosome"/>
</dbReference>
<dbReference type="GO" id="GO:0005886">
    <property type="term" value="C:plasma membrane"/>
    <property type="evidence" value="ECO:0007669"/>
    <property type="project" value="UniProtKB-SubCell"/>
</dbReference>
<dbReference type="GO" id="GO:0045259">
    <property type="term" value="C:proton-transporting ATP synthase complex"/>
    <property type="evidence" value="ECO:0007669"/>
    <property type="project" value="UniProtKB-KW"/>
</dbReference>
<dbReference type="GO" id="GO:0005524">
    <property type="term" value="F:ATP binding"/>
    <property type="evidence" value="ECO:0007669"/>
    <property type="project" value="UniProtKB-UniRule"/>
</dbReference>
<dbReference type="GO" id="GO:0046933">
    <property type="term" value="F:proton-transporting ATP synthase activity, rotational mechanism"/>
    <property type="evidence" value="ECO:0007669"/>
    <property type="project" value="UniProtKB-UniRule"/>
</dbReference>
<dbReference type="CDD" id="cd12152">
    <property type="entry name" value="F1-ATPase_delta"/>
    <property type="match status" value="1"/>
</dbReference>
<dbReference type="FunFam" id="2.60.15.10:FF:000001">
    <property type="entry name" value="ATP synthase epsilon chain"/>
    <property type="match status" value="1"/>
</dbReference>
<dbReference type="Gene3D" id="1.20.5.440">
    <property type="entry name" value="ATP synthase delta/epsilon subunit, C-terminal domain"/>
    <property type="match status" value="1"/>
</dbReference>
<dbReference type="Gene3D" id="2.60.15.10">
    <property type="entry name" value="F0F1 ATP synthase delta/epsilon subunit, N-terminal"/>
    <property type="match status" value="1"/>
</dbReference>
<dbReference type="HAMAP" id="MF_00530">
    <property type="entry name" value="ATP_synth_epsil_bac"/>
    <property type="match status" value="1"/>
</dbReference>
<dbReference type="InterPro" id="IPR036794">
    <property type="entry name" value="ATP_F1_dsu/esu_C_sf"/>
</dbReference>
<dbReference type="InterPro" id="IPR001469">
    <property type="entry name" value="ATP_synth_F1_dsu/esu"/>
</dbReference>
<dbReference type="InterPro" id="IPR020546">
    <property type="entry name" value="ATP_synth_F1_dsu/esu_N"/>
</dbReference>
<dbReference type="InterPro" id="IPR020547">
    <property type="entry name" value="ATP_synth_F1_esu_C"/>
</dbReference>
<dbReference type="InterPro" id="IPR036771">
    <property type="entry name" value="ATPsynth_dsu/esu_N"/>
</dbReference>
<dbReference type="NCBIfam" id="TIGR01216">
    <property type="entry name" value="ATP_synt_epsi"/>
    <property type="match status" value="1"/>
</dbReference>
<dbReference type="NCBIfam" id="NF001847">
    <property type="entry name" value="PRK00571.1-4"/>
    <property type="match status" value="1"/>
</dbReference>
<dbReference type="PANTHER" id="PTHR13822">
    <property type="entry name" value="ATP SYNTHASE DELTA/EPSILON CHAIN"/>
    <property type="match status" value="1"/>
</dbReference>
<dbReference type="PANTHER" id="PTHR13822:SF10">
    <property type="entry name" value="ATP SYNTHASE EPSILON CHAIN, CHLOROPLASTIC"/>
    <property type="match status" value="1"/>
</dbReference>
<dbReference type="Pfam" id="PF00401">
    <property type="entry name" value="ATP-synt_DE"/>
    <property type="match status" value="1"/>
</dbReference>
<dbReference type="Pfam" id="PF02823">
    <property type="entry name" value="ATP-synt_DE_N"/>
    <property type="match status" value="1"/>
</dbReference>
<dbReference type="SUPFAM" id="SSF46604">
    <property type="entry name" value="Epsilon subunit of F1F0-ATP synthase C-terminal domain"/>
    <property type="match status" value="1"/>
</dbReference>
<dbReference type="SUPFAM" id="SSF51344">
    <property type="entry name" value="Epsilon subunit of F1F0-ATP synthase N-terminal domain"/>
    <property type="match status" value="1"/>
</dbReference>
<evidence type="ECO:0000255" key="1">
    <source>
        <dbReference type="HAMAP-Rule" id="MF_00530"/>
    </source>
</evidence>
<accession>B9MBA4</accession>
<comment type="function">
    <text evidence="1">Produces ATP from ADP in the presence of a proton gradient across the membrane.</text>
</comment>
<comment type="subunit">
    <text evidence="1">F-type ATPases have 2 components, CF(1) - the catalytic core - and CF(0) - the membrane proton channel. CF(1) has five subunits: alpha(3), beta(3), gamma(1), delta(1), epsilon(1). CF(0) has three main subunits: a, b and c.</text>
</comment>
<comment type="subcellular location">
    <subcellularLocation>
        <location evidence="1">Cell inner membrane</location>
        <topology evidence="1">Peripheral membrane protein</topology>
    </subcellularLocation>
</comment>
<comment type="similarity">
    <text evidence="1">Belongs to the ATPase epsilon chain family.</text>
</comment>
<feature type="chain" id="PRO_1000146326" description="ATP synthase epsilon chain">
    <location>
        <begin position="1"/>
        <end position="138"/>
    </location>
</feature>
<sequence length="138" mass="14955">MNTIHVDVVSAEESIFSGEARFVALPGEAGELGIYPRHTPLITRIKPGSVRIELPDGNEEFVFVAGGILEVQPDCVTVLSDTAIRGRDLDDQKAQEAKAAAEEALKNAKSEIDLARAQSELAVMAAQIAALRKFRQKR</sequence>
<name>ATPE_ACIET</name>
<reference key="1">
    <citation type="submission" date="2009-01" db="EMBL/GenBank/DDBJ databases">
        <title>Complete sequence of Diaphorobacter sp. TPSY.</title>
        <authorList>
            <consortium name="US DOE Joint Genome Institute"/>
            <person name="Lucas S."/>
            <person name="Copeland A."/>
            <person name="Lapidus A."/>
            <person name="Glavina del Rio T."/>
            <person name="Tice H."/>
            <person name="Bruce D."/>
            <person name="Goodwin L."/>
            <person name="Pitluck S."/>
            <person name="Chertkov O."/>
            <person name="Brettin T."/>
            <person name="Detter J.C."/>
            <person name="Han C."/>
            <person name="Larimer F."/>
            <person name="Land M."/>
            <person name="Hauser L."/>
            <person name="Kyrpides N."/>
            <person name="Mikhailova N."/>
            <person name="Coates J.D."/>
        </authorList>
    </citation>
    <scope>NUCLEOTIDE SEQUENCE [LARGE SCALE GENOMIC DNA]</scope>
    <source>
        <strain>TPSY</strain>
    </source>
</reference>
<proteinExistence type="inferred from homology"/>
<protein>
    <recommendedName>
        <fullName evidence="1">ATP synthase epsilon chain</fullName>
    </recommendedName>
    <alternativeName>
        <fullName evidence="1">ATP synthase F1 sector epsilon subunit</fullName>
    </alternativeName>
    <alternativeName>
        <fullName evidence="1">F-ATPase epsilon subunit</fullName>
    </alternativeName>
</protein>
<gene>
    <name evidence="1" type="primary">atpC</name>
    <name type="ordered locus">Dtpsy_0304</name>
</gene>
<keyword id="KW-0066">ATP synthesis</keyword>
<keyword id="KW-0997">Cell inner membrane</keyword>
<keyword id="KW-1003">Cell membrane</keyword>
<keyword id="KW-0139">CF(1)</keyword>
<keyword id="KW-0375">Hydrogen ion transport</keyword>
<keyword id="KW-0406">Ion transport</keyword>
<keyword id="KW-0472">Membrane</keyword>
<keyword id="KW-1185">Reference proteome</keyword>
<keyword id="KW-0813">Transport</keyword>
<organism>
    <name type="scientific">Acidovorax ebreus (strain TPSY)</name>
    <name type="common">Diaphorobacter sp. (strain TPSY)</name>
    <dbReference type="NCBI Taxonomy" id="535289"/>
    <lineage>
        <taxon>Bacteria</taxon>
        <taxon>Pseudomonadati</taxon>
        <taxon>Pseudomonadota</taxon>
        <taxon>Betaproteobacteria</taxon>
        <taxon>Burkholderiales</taxon>
        <taxon>Comamonadaceae</taxon>
        <taxon>Diaphorobacter</taxon>
    </lineage>
</organism>